<gene>
    <name evidence="1" type="primary">sucC</name>
    <name type="ordered locus">CFF8240_0911</name>
</gene>
<accession>A0RPE8</accession>
<comment type="function">
    <text evidence="1">Succinyl-CoA synthetase functions in the citric acid cycle (TCA), coupling the hydrolysis of succinyl-CoA to the synthesis of either ATP or GTP and thus represents the only step of substrate-level phosphorylation in the TCA. The beta subunit provides nucleotide specificity of the enzyme and binds the substrate succinate, while the binding sites for coenzyme A and phosphate are found in the alpha subunit.</text>
</comment>
<comment type="catalytic activity">
    <reaction evidence="1">
        <text>succinate + ATP + CoA = succinyl-CoA + ADP + phosphate</text>
        <dbReference type="Rhea" id="RHEA:17661"/>
        <dbReference type="ChEBI" id="CHEBI:30031"/>
        <dbReference type="ChEBI" id="CHEBI:30616"/>
        <dbReference type="ChEBI" id="CHEBI:43474"/>
        <dbReference type="ChEBI" id="CHEBI:57287"/>
        <dbReference type="ChEBI" id="CHEBI:57292"/>
        <dbReference type="ChEBI" id="CHEBI:456216"/>
        <dbReference type="EC" id="6.2.1.5"/>
    </reaction>
    <physiologicalReaction direction="right-to-left" evidence="1">
        <dbReference type="Rhea" id="RHEA:17663"/>
    </physiologicalReaction>
</comment>
<comment type="catalytic activity">
    <reaction evidence="1">
        <text>GTP + succinate + CoA = succinyl-CoA + GDP + phosphate</text>
        <dbReference type="Rhea" id="RHEA:22120"/>
        <dbReference type="ChEBI" id="CHEBI:30031"/>
        <dbReference type="ChEBI" id="CHEBI:37565"/>
        <dbReference type="ChEBI" id="CHEBI:43474"/>
        <dbReference type="ChEBI" id="CHEBI:57287"/>
        <dbReference type="ChEBI" id="CHEBI:57292"/>
        <dbReference type="ChEBI" id="CHEBI:58189"/>
    </reaction>
    <physiologicalReaction direction="right-to-left" evidence="1">
        <dbReference type="Rhea" id="RHEA:22122"/>
    </physiologicalReaction>
</comment>
<comment type="cofactor">
    <cofactor evidence="1">
        <name>Mg(2+)</name>
        <dbReference type="ChEBI" id="CHEBI:18420"/>
    </cofactor>
    <text evidence="1">Binds 1 Mg(2+) ion per subunit.</text>
</comment>
<comment type="pathway">
    <text evidence="1">Carbohydrate metabolism; tricarboxylic acid cycle; succinate from succinyl-CoA (ligase route): step 1/1.</text>
</comment>
<comment type="subunit">
    <text evidence="1">Heterotetramer of two alpha and two beta subunits.</text>
</comment>
<comment type="similarity">
    <text evidence="1">Belongs to the succinate/malate CoA ligase beta subunit family.</text>
</comment>
<protein>
    <recommendedName>
        <fullName evidence="1">Succinate--CoA ligase [ADP-forming] subunit beta</fullName>
        <ecNumber evidence="1">6.2.1.5</ecNumber>
    </recommendedName>
    <alternativeName>
        <fullName evidence="1">Succinyl-CoA synthetase subunit beta</fullName>
        <shortName evidence="1">SCS-beta</shortName>
    </alternativeName>
</protein>
<name>SUCC_CAMFF</name>
<feature type="chain" id="PRO_1000082051" description="Succinate--CoA ligase [ADP-forming] subunit beta">
    <location>
        <begin position="1"/>
        <end position="385"/>
    </location>
</feature>
<feature type="domain" description="ATP-grasp" evidence="1">
    <location>
        <begin position="9"/>
        <end position="241"/>
    </location>
</feature>
<feature type="binding site" evidence="1">
    <location>
        <position position="46"/>
    </location>
    <ligand>
        <name>ATP</name>
        <dbReference type="ChEBI" id="CHEBI:30616"/>
    </ligand>
</feature>
<feature type="binding site" evidence="1">
    <location>
        <begin position="53"/>
        <end position="55"/>
    </location>
    <ligand>
        <name>ATP</name>
        <dbReference type="ChEBI" id="CHEBI:30616"/>
    </ligand>
</feature>
<feature type="binding site" evidence="1">
    <location>
        <position position="99"/>
    </location>
    <ligand>
        <name>ATP</name>
        <dbReference type="ChEBI" id="CHEBI:30616"/>
    </ligand>
</feature>
<feature type="binding site" evidence="1">
    <location>
        <position position="102"/>
    </location>
    <ligand>
        <name>ATP</name>
        <dbReference type="ChEBI" id="CHEBI:30616"/>
    </ligand>
</feature>
<feature type="binding site" evidence="1">
    <location>
        <position position="107"/>
    </location>
    <ligand>
        <name>ATP</name>
        <dbReference type="ChEBI" id="CHEBI:30616"/>
    </ligand>
</feature>
<feature type="binding site" evidence="1">
    <location>
        <position position="196"/>
    </location>
    <ligand>
        <name>Mg(2+)</name>
        <dbReference type="ChEBI" id="CHEBI:18420"/>
    </ligand>
</feature>
<feature type="binding site" evidence="1">
    <location>
        <position position="210"/>
    </location>
    <ligand>
        <name>Mg(2+)</name>
        <dbReference type="ChEBI" id="CHEBI:18420"/>
    </ligand>
</feature>
<feature type="binding site" evidence="1">
    <location>
        <position position="261"/>
    </location>
    <ligand>
        <name>substrate</name>
        <note>ligand shared with subunit alpha</note>
    </ligand>
</feature>
<feature type="binding site" evidence="1">
    <location>
        <begin position="318"/>
        <end position="320"/>
    </location>
    <ligand>
        <name>substrate</name>
        <note>ligand shared with subunit alpha</note>
    </ligand>
</feature>
<dbReference type="EC" id="6.2.1.5" evidence="1"/>
<dbReference type="EMBL" id="CP000487">
    <property type="protein sequence ID" value="ABK82335.1"/>
    <property type="molecule type" value="Genomic_DNA"/>
</dbReference>
<dbReference type="RefSeq" id="WP_002849429.1">
    <property type="nucleotide sequence ID" value="NC_008599.1"/>
</dbReference>
<dbReference type="SMR" id="A0RPE8"/>
<dbReference type="GeneID" id="61064743"/>
<dbReference type="KEGG" id="cff:CFF8240_0911"/>
<dbReference type="eggNOG" id="COG0045">
    <property type="taxonomic scope" value="Bacteria"/>
</dbReference>
<dbReference type="HOGENOM" id="CLU_037430_0_2_7"/>
<dbReference type="UniPathway" id="UPA00223">
    <property type="reaction ID" value="UER00999"/>
</dbReference>
<dbReference type="Proteomes" id="UP000000760">
    <property type="component" value="Chromosome"/>
</dbReference>
<dbReference type="GO" id="GO:0005829">
    <property type="term" value="C:cytosol"/>
    <property type="evidence" value="ECO:0007669"/>
    <property type="project" value="TreeGrafter"/>
</dbReference>
<dbReference type="GO" id="GO:0042709">
    <property type="term" value="C:succinate-CoA ligase complex"/>
    <property type="evidence" value="ECO:0007669"/>
    <property type="project" value="TreeGrafter"/>
</dbReference>
<dbReference type="GO" id="GO:0005524">
    <property type="term" value="F:ATP binding"/>
    <property type="evidence" value="ECO:0007669"/>
    <property type="project" value="UniProtKB-UniRule"/>
</dbReference>
<dbReference type="GO" id="GO:0000287">
    <property type="term" value="F:magnesium ion binding"/>
    <property type="evidence" value="ECO:0007669"/>
    <property type="project" value="UniProtKB-UniRule"/>
</dbReference>
<dbReference type="GO" id="GO:0004775">
    <property type="term" value="F:succinate-CoA ligase (ADP-forming) activity"/>
    <property type="evidence" value="ECO:0007669"/>
    <property type="project" value="UniProtKB-UniRule"/>
</dbReference>
<dbReference type="GO" id="GO:0004776">
    <property type="term" value="F:succinate-CoA ligase (GDP-forming) activity"/>
    <property type="evidence" value="ECO:0007669"/>
    <property type="project" value="RHEA"/>
</dbReference>
<dbReference type="GO" id="GO:0006104">
    <property type="term" value="P:succinyl-CoA metabolic process"/>
    <property type="evidence" value="ECO:0007669"/>
    <property type="project" value="TreeGrafter"/>
</dbReference>
<dbReference type="GO" id="GO:0006099">
    <property type="term" value="P:tricarboxylic acid cycle"/>
    <property type="evidence" value="ECO:0007669"/>
    <property type="project" value="UniProtKB-UniRule"/>
</dbReference>
<dbReference type="FunFam" id="3.30.1490.20:FF:000002">
    <property type="entry name" value="Succinate--CoA ligase [ADP-forming] subunit beta"/>
    <property type="match status" value="1"/>
</dbReference>
<dbReference type="FunFam" id="3.30.470.20:FF:000002">
    <property type="entry name" value="Succinate--CoA ligase [ADP-forming] subunit beta"/>
    <property type="match status" value="1"/>
</dbReference>
<dbReference type="FunFam" id="3.40.50.261:FF:000001">
    <property type="entry name" value="Succinate--CoA ligase [ADP-forming] subunit beta"/>
    <property type="match status" value="1"/>
</dbReference>
<dbReference type="Gene3D" id="3.30.1490.20">
    <property type="entry name" value="ATP-grasp fold, A domain"/>
    <property type="match status" value="1"/>
</dbReference>
<dbReference type="Gene3D" id="3.30.470.20">
    <property type="entry name" value="ATP-grasp fold, B domain"/>
    <property type="match status" value="1"/>
</dbReference>
<dbReference type="Gene3D" id="3.40.50.261">
    <property type="entry name" value="Succinyl-CoA synthetase domains"/>
    <property type="match status" value="1"/>
</dbReference>
<dbReference type="HAMAP" id="MF_00558">
    <property type="entry name" value="Succ_CoA_beta"/>
    <property type="match status" value="1"/>
</dbReference>
<dbReference type="InterPro" id="IPR011761">
    <property type="entry name" value="ATP-grasp"/>
</dbReference>
<dbReference type="InterPro" id="IPR013650">
    <property type="entry name" value="ATP-grasp_succ-CoA_synth-type"/>
</dbReference>
<dbReference type="InterPro" id="IPR013815">
    <property type="entry name" value="ATP_grasp_subdomain_1"/>
</dbReference>
<dbReference type="InterPro" id="IPR017866">
    <property type="entry name" value="Succ-CoA_synthase_bsu_CS"/>
</dbReference>
<dbReference type="InterPro" id="IPR005811">
    <property type="entry name" value="SUCC_ACL_C"/>
</dbReference>
<dbReference type="InterPro" id="IPR005809">
    <property type="entry name" value="Succ_CoA_ligase-like_bsu"/>
</dbReference>
<dbReference type="InterPro" id="IPR016102">
    <property type="entry name" value="Succinyl-CoA_synth-like"/>
</dbReference>
<dbReference type="NCBIfam" id="NF001913">
    <property type="entry name" value="PRK00696.1"/>
    <property type="match status" value="1"/>
</dbReference>
<dbReference type="NCBIfam" id="TIGR01016">
    <property type="entry name" value="sucCoAbeta"/>
    <property type="match status" value="1"/>
</dbReference>
<dbReference type="PANTHER" id="PTHR11815:SF10">
    <property type="entry name" value="SUCCINATE--COA LIGASE [GDP-FORMING] SUBUNIT BETA, MITOCHONDRIAL"/>
    <property type="match status" value="1"/>
</dbReference>
<dbReference type="PANTHER" id="PTHR11815">
    <property type="entry name" value="SUCCINYL-COA SYNTHETASE BETA CHAIN"/>
    <property type="match status" value="1"/>
</dbReference>
<dbReference type="Pfam" id="PF08442">
    <property type="entry name" value="ATP-grasp_2"/>
    <property type="match status" value="1"/>
</dbReference>
<dbReference type="Pfam" id="PF00549">
    <property type="entry name" value="Ligase_CoA"/>
    <property type="match status" value="1"/>
</dbReference>
<dbReference type="PIRSF" id="PIRSF001554">
    <property type="entry name" value="SucCS_beta"/>
    <property type="match status" value="1"/>
</dbReference>
<dbReference type="SUPFAM" id="SSF56059">
    <property type="entry name" value="Glutathione synthetase ATP-binding domain-like"/>
    <property type="match status" value="1"/>
</dbReference>
<dbReference type="SUPFAM" id="SSF52210">
    <property type="entry name" value="Succinyl-CoA synthetase domains"/>
    <property type="match status" value="1"/>
</dbReference>
<dbReference type="PROSITE" id="PS50975">
    <property type="entry name" value="ATP_GRASP"/>
    <property type="match status" value="1"/>
</dbReference>
<dbReference type="PROSITE" id="PS01217">
    <property type="entry name" value="SUCCINYL_COA_LIG_3"/>
    <property type="match status" value="1"/>
</dbReference>
<keyword id="KW-0067">ATP-binding</keyword>
<keyword id="KW-0436">Ligase</keyword>
<keyword id="KW-0460">Magnesium</keyword>
<keyword id="KW-0479">Metal-binding</keyword>
<keyword id="KW-0547">Nucleotide-binding</keyword>
<keyword id="KW-0816">Tricarboxylic acid cycle</keyword>
<organism>
    <name type="scientific">Campylobacter fetus subsp. fetus (strain 82-40)</name>
    <dbReference type="NCBI Taxonomy" id="360106"/>
    <lineage>
        <taxon>Bacteria</taxon>
        <taxon>Pseudomonadati</taxon>
        <taxon>Campylobacterota</taxon>
        <taxon>Epsilonproteobacteria</taxon>
        <taxon>Campylobacterales</taxon>
        <taxon>Campylobacteraceae</taxon>
        <taxon>Campylobacter</taxon>
    </lineage>
</organism>
<sequence length="385" mass="41801">MNIHEFQAKELLRDFGINVADGIMVVSVDDALNAAKKLGGSVWAVKAQIHAGGRGLGGGVKIAKSLDEVKEYASKILGMTLVTKQTGPEGKLVKKLYIEKGTNIDKEYYLSLTFDRINECIAVIASADGGMNIEEVDHDKIITIRIDPQIGLRDFHSLAIADFLNLDKDLSVKLHVLLSKLYRLYWQTDSNLVEINPLVLTKENDLIPLDAKMGFDDSALFRQEKIANMRDIDEEEPSELEAKTYGLSYVKLDGNIGCMVNGAGLAMGTMDTINGVGGKPANFLDVGGGANPQTVAKAFEIILRDKNVKSIFVNIFGGIVRCDRIANGILEATKLTKVEVPVIVRLDGTNAKEAAEILKQANITNIISAPDLESGAKMSVELANK</sequence>
<reference key="1">
    <citation type="submission" date="2006-11" db="EMBL/GenBank/DDBJ databases">
        <title>Sequence of Campylobacter fetus subsp. fetus 82-40.</title>
        <authorList>
            <person name="Fouts D.E."/>
            <person name="Nelson K.E."/>
        </authorList>
    </citation>
    <scope>NUCLEOTIDE SEQUENCE [LARGE SCALE GENOMIC DNA]</scope>
    <source>
        <strain>82-40</strain>
    </source>
</reference>
<proteinExistence type="inferred from homology"/>
<evidence type="ECO:0000255" key="1">
    <source>
        <dbReference type="HAMAP-Rule" id="MF_00558"/>
    </source>
</evidence>